<dbReference type="EC" id="3.5.3.22" evidence="2"/>
<dbReference type="EMBL" id="X84101">
    <property type="protein sequence ID" value="CAA58904.1"/>
    <property type="molecule type" value="Genomic_DNA"/>
</dbReference>
<dbReference type="EMBL" id="U87786">
    <property type="protein sequence ID" value="AAA62451.1"/>
    <property type="molecule type" value="Genomic_DNA"/>
</dbReference>
<dbReference type="PIR" id="S57669">
    <property type="entry name" value="S57669"/>
</dbReference>
<dbReference type="RefSeq" id="WP_003952511.1">
    <property type="nucleotide sequence ID" value="NZ_CM000913.1"/>
</dbReference>
<dbReference type="PDB" id="1GQ6">
    <property type="method" value="X-ray"/>
    <property type="resolution" value="1.75 A"/>
    <property type="chains" value="A/B/C=1-313"/>
</dbReference>
<dbReference type="PDB" id="1GQ7">
    <property type="method" value="X-ray"/>
    <property type="resolution" value="2.45 A"/>
    <property type="chains" value="A/B/C/D/E/F=1-313"/>
</dbReference>
<dbReference type="PDBsum" id="1GQ6"/>
<dbReference type="PDBsum" id="1GQ7"/>
<dbReference type="SMR" id="P0DJQ3"/>
<dbReference type="STRING" id="1901.BB341_07815"/>
<dbReference type="GeneID" id="93729326"/>
<dbReference type="eggNOG" id="COG0010">
    <property type="taxonomic scope" value="Bacteria"/>
</dbReference>
<dbReference type="OrthoDB" id="9788689at2"/>
<dbReference type="BioCyc" id="MetaCyc:MONOMER-13488"/>
<dbReference type="BRENDA" id="3.5.3.22">
    <property type="organism ID" value="5988"/>
</dbReference>
<dbReference type="UniPathway" id="UPA00112">
    <property type="reaction ID" value="UER00245"/>
</dbReference>
<dbReference type="EvolutionaryTrace" id="P0DJQ3"/>
<dbReference type="GO" id="GO:0008783">
    <property type="term" value="F:agmatinase activity"/>
    <property type="evidence" value="ECO:0007669"/>
    <property type="project" value="TreeGrafter"/>
</dbReference>
<dbReference type="GO" id="GO:0046872">
    <property type="term" value="F:metal ion binding"/>
    <property type="evidence" value="ECO:0007669"/>
    <property type="project" value="UniProtKB-KW"/>
</dbReference>
<dbReference type="GO" id="GO:0033972">
    <property type="term" value="F:proclavaminate amidinohydrolase activity"/>
    <property type="evidence" value="ECO:0007669"/>
    <property type="project" value="UniProtKB-EC"/>
</dbReference>
<dbReference type="GO" id="GO:0033050">
    <property type="term" value="P:clavulanic acid biosynthetic process"/>
    <property type="evidence" value="ECO:0007669"/>
    <property type="project" value="UniProtKB-UniPathway"/>
</dbReference>
<dbReference type="GO" id="GO:0033389">
    <property type="term" value="P:putrescine biosynthetic process from arginine, via agmatine"/>
    <property type="evidence" value="ECO:0007669"/>
    <property type="project" value="TreeGrafter"/>
</dbReference>
<dbReference type="CDD" id="cd11592">
    <property type="entry name" value="Agmatinase_PAH"/>
    <property type="match status" value="1"/>
</dbReference>
<dbReference type="Gene3D" id="3.40.800.10">
    <property type="entry name" value="Ureohydrolase domain"/>
    <property type="match status" value="1"/>
</dbReference>
<dbReference type="InterPro" id="IPR005925">
    <property type="entry name" value="Agmatinase-rel"/>
</dbReference>
<dbReference type="InterPro" id="IPR006035">
    <property type="entry name" value="Ureohydrolase"/>
</dbReference>
<dbReference type="InterPro" id="IPR023696">
    <property type="entry name" value="Ureohydrolase_dom_sf"/>
</dbReference>
<dbReference type="InterPro" id="IPR020855">
    <property type="entry name" value="Ureohydrolase_Mn_BS"/>
</dbReference>
<dbReference type="NCBIfam" id="TIGR01230">
    <property type="entry name" value="agmatinase"/>
    <property type="match status" value="1"/>
</dbReference>
<dbReference type="PANTHER" id="PTHR11358">
    <property type="entry name" value="ARGINASE/AGMATINASE"/>
    <property type="match status" value="1"/>
</dbReference>
<dbReference type="PANTHER" id="PTHR11358:SF26">
    <property type="entry name" value="GUANIDINO ACID HYDROLASE, MITOCHONDRIAL"/>
    <property type="match status" value="1"/>
</dbReference>
<dbReference type="Pfam" id="PF00491">
    <property type="entry name" value="Arginase"/>
    <property type="match status" value="1"/>
</dbReference>
<dbReference type="PIRSF" id="PIRSF036979">
    <property type="entry name" value="Arginase"/>
    <property type="match status" value="1"/>
</dbReference>
<dbReference type="PRINTS" id="PR00116">
    <property type="entry name" value="ARGINASE"/>
</dbReference>
<dbReference type="SUPFAM" id="SSF52768">
    <property type="entry name" value="Arginase/deacetylase"/>
    <property type="match status" value="1"/>
</dbReference>
<dbReference type="PROSITE" id="PS01053">
    <property type="entry name" value="ARGINASE_1"/>
    <property type="match status" value="1"/>
</dbReference>
<dbReference type="PROSITE" id="PS51409">
    <property type="entry name" value="ARGINASE_2"/>
    <property type="match status" value="1"/>
</dbReference>
<name>PAH_STRCL</name>
<comment type="catalytic activity">
    <reaction evidence="2">
        <text>amidinoproclavaminate + H2O = proclavaminate + urea</text>
        <dbReference type="Rhea" id="RHEA:17001"/>
        <dbReference type="ChEBI" id="CHEBI:15377"/>
        <dbReference type="ChEBI" id="CHEBI:16199"/>
        <dbReference type="ChEBI" id="CHEBI:57302"/>
        <dbReference type="ChEBI" id="CHEBI:58647"/>
        <dbReference type="EC" id="3.5.3.22"/>
    </reaction>
</comment>
<comment type="cofactor">
    <cofactor evidence="1 2">
        <name>Mn(2+)</name>
        <dbReference type="ChEBI" id="CHEBI:29035"/>
    </cofactor>
    <text evidence="1 2">Binds 2 manganese ions per subunit.</text>
</comment>
<comment type="pathway">
    <text evidence="3">Antibiotic biosynthesis; clavulanate biosynthesis; clavulanate from D-glyceraldehyde 3-phosphate and L-arginine: step 4/8.</text>
</comment>
<comment type="subunit">
    <text evidence="2">Homohexamer.</text>
</comment>
<comment type="similarity">
    <text evidence="1">Belongs to the arginase family.</text>
</comment>
<reference key="1">
    <citation type="journal article" date="1995" name="Gene">
        <title>Clavulanic acid biosynthesis in Streptomyces clavuligerus: gene cloning and characterization.</title>
        <authorList>
            <person name="Hodgson J.E."/>
            <person name="Fosberry A.P."/>
            <person name="Rawlinson N.S."/>
            <person name="Ross H.N.M."/>
            <person name="Neal R.J."/>
            <person name="Arnell J.C."/>
            <person name="Earl A.J."/>
            <person name="Lawlor E.J."/>
        </authorList>
    </citation>
    <scope>NUCLEOTIDE SEQUENCE [GENOMIC DNA]</scope>
</reference>
<reference key="2">
    <citation type="journal article" date="1994" name="Gene">
        <title>Cloning, sequencing and disruption of a gene from Streptomyces clavuligerus involved in clavulanic acid biosynthesis.</title>
        <authorList>
            <person name="Aidoo K.A."/>
            <person name="Wong A."/>
            <person name="Alexander D.C."/>
            <person name="Rittammer R.A.R."/>
            <person name="Jensen S.E."/>
        </authorList>
    </citation>
    <scope>NUCLEOTIDE SEQUENCE [GENOMIC DNA]</scope>
    <source>
        <strain>ATCC 27064 / DSM 738 / JCM 4710 / NBRC 13307 / NCIMB 12785 / NRRL 3585 / VKM Ac-602</strain>
    </source>
</reference>
<reference key="3">
    <citation type="journal article" date="2002" name="Biochem. J.">
        <title>Oligomeric structure of proclavaminic acid amidino hydrolase: evolution of a hydrolytic enzyme in clavulanic acid biosynthesis.</title>
        <authorList>
            <person name="Elkins J.M."/>
            <person name="Clifton I.J."/>
            <person name="Hernandez H."/>
            <person name="Doan L.X."/>
            <person name="Robinson C.V."/>
            <person name="Schofield C.J."/>
            <person name="Hewitson K.S."/>
        </authorList>
    </citation>
    <scope>X-RAY CRYSTALLOGRAPHY (1.75 ANGSTROMS) IN COMPLEX WITH MANGANESE</scope>
    <scope>PROTEIN SEQUENCE OF 1-6</scope>
    <scope>CATALYTIC ACTIVITY</scope>
    <scope>COFACTOR</scope>
    <scope>SUBUNIT</scope>
</reference>
<keyword id="KW-0002">3D-structure</keyword>
<keyword id="KW-0903">Direct protein sequencing</keyword>
<keyword id="KW-0378">Hydrolase</keyword>
<keyword id="KW-0464">Manganese</keyword>
<keyword id="KW-0479">Metal-binding</keyword>
<feature type="chain" id="PRO_0000173746" description="Proclavaminate amidinohydrolase">
    <location>
        <begin position="1"/>
        <end position="313"/>
    </location>
</feature>
<feature type="binding site" evidence="2 4 5">
    <location>
        <position position="121"/>
    </location>
    <ligand>
        <name>Mn(2+)</name>
        <dbReference type="ChEBI" id="CHEBI:29035"/>
        <label>1</label>
    </ligand>
</feature>
<feature type="binding site" evidence="2 4 5">
    <location>
        <position position="144"/>
    </location>
    <ligand>
        <name>Mn(2+)</name>
        <dbReference type="ChEBI" id="CHEBI:29035"/>
        <label>1</label>
    </ligand>
</feature>
<feature type="binding site" evidence="2 4 5">
    <location>
        <position position="144"/>
    </location>
    <ligand>
        <name>Mn(2+)</name>
        <dbReference type="ChEBI" id="CHEBI:29035"/>
        <label>2</label>
    </ligand>
</feature>
<feature type="binding site" evidence="2 4 5">
    <location>
        <position position="146"/>
    </location>
    <ligand>
        <name>Mn(2+)</name>
        <dbReference type="ChEBI" id="CHEBI:29035"/>
        <label>2</label>
    </ligand>
</feature>
<feature type="binding site" evidence="2 4 5">
    <location>
        <position position="148"/>
    </location>
    <ligand>
        <name>Mn(2+)</name>
        <dbReference type="ChEBI" id="CHEBI:29035"/>
        <label>1</label>
    </ligand>
</feature>
<feature type="binding site" evidence="2 4 5">
    <location>
        <position position="235"/>
    </location>
    <ligand>
        <name>Mn(2+)</name>
        <dbReference type="ChEBI" id="CHEBI:29035"/>
        <label>1</label>
    </ligand>
</feature>
<feature type="binding site" evidence="2 4 5">
    <location>
        <position position="235"/>
    </location>
    <ligand>
        <name>Mn(2+)</name>
        <dbReference type="ChEBI" id="CHEBI:29035"/>
        <label>2</label>
    </ligand>
</feature>
<feature type="binding site" evidence="2 4 5">
    <location>
        <position position="237"/>
    </location>
    <ligand>
        <name>Mn(2+)</name>
        <dbReference type="ChEBI" id="CHEBI:29035"/>
        <label>2</label>
    </ligand>
</feature>
<feature type="strand" evidence="7">
    <location>
        <begin position="13"/>
        <end position="15"/>
    </location>
</feature>
<feature type="helix" evidence="6">
    <location>
        <begin position="18"/>
        <end position="20"/>
    </location>
</feature>
<feature type="strand" evidence="6">
    <location>
        <begin position="31"/>
        <end position="37"/>
    </location>
</feature>
<feature type="helix" evidence="6">
    <location>
        <begin position="49"/>
        <end position="51"/>
    </location>
</feature>
<feature type="helix" evidence="6">
    <location>
        <begin position="52"/>
        <end position="60"/>
    </location>
</feature>
<feature type="strand" evidence="7">
    <location>
        <begin position="68"/>
        <end position="72"/>
    </location>
</feature>
<feature type="helix" evidence="6">
    <location>
        <begin position="74"/>
        <end position="77"/>
    </location>
</feature>
<feature type="strand" evidence="6">
    <location>
        <begin position="80"/>
        <end position="85"/>
    </location>
</feature>
<feature type="helix" evidence="6">
    <location>
        <begin position="93"/>
        <end position="110"/>
    </location>
</feature>
<feature type="strand" evidence="6">
    <location>
        <begin position="111"/>
        <end position="119"/>
    </location>
</feature>
<feature type="helix" evidence="6">
    <location>
        <begin position="121"/>
        <end position="123"/>
    </location>
</feature>
<feature type="helix" evidence="6">
    <location>
        <begin position="124"/>
        <end position="135"/>
    </location>
</feature>
<feature type="strand" evidence="6">
    <location>
        <begin position="136"/>
        <end position="143"/>
    </location>
</feature>
<feature type="helix" evidence="6">
    <location>
        <begin position="163"/>
        <end position="169"/>
    </location>
</feature>
<feature type="strand" evidence="6">
    <location>
        <begin position="172"/>
        <end position="183"/>
    </location>
</feature>
<feature type="strand" evidence="6">
    <location>
        <begin position="187"/>
        <end position="189"/>
    </location>
</feature>
<feature type="turn" evidence="7">
    <location>
        <begin position="190"/>
        <end position="193"/>
    </location>
</feature>
<feature type="helix" evidence="6">
    <location>
        <begin position="194"/>
        <end position="198"/>
    </location>
</feature>
<feature type="strand" evidence="6">
    <location>
        <begin position="202"/>
        <end position="205"/>
    </location>
</feature>
<feature type="helix" evidence="6">
    <location>
        <begin position="206"/>
        <end position="225"/>
    </location>
</feature>
<feature type="strand" evidence="6">
    <location>
        <begin position="228"/>
        <end position="235"/>
    </location>
</feature>
<feature type="helix" evidence="6">
    <location>
        <begin position="236"/>
        <end position="238"/>
    </location>
</feature>
<feature type="turn" evidence="6">
    <location>
        <begin position="241"/>
        <end position="243"/>
    </location>
</feature>
<feature type="strand" evidence="6">
    <location>
        <begin position="246"/>
        <end position="249"/>
    </location>
</feature>
<feature type="helix" evidence="6">
    <location>
        <begin position="257"/>
        <end position="263"/>
    </location>
</feature>
<feature type="helix" evidence="6">
    <location>
        <begin position="264"/>
        <end position="269"/>
    </location>
</feature>
<feature type="strand" evidence="6">
    <location>
        <begin position="270"/>
        <end position="278"/>
    </location>
</feature>
<feature type="helix" evidence="6">
    <location>
        <begin position="282"/>
        <end position="284"/>
    </location>
</feature>
<feature type="helix" evidence="6">
    <location>
        <begin position="289"/>
        <end position="308"/>
    </location>
</feature>
<organism>
    <name type="scientific">Streptomyces clavuligerus</name>
    <dbReference type="NCBI Taxonomy" id="1901"/>
    <lineage>
        <taxon>Bacteria</taxon>
        <taxon>Bacillati</taxon>
        <taxon>Actinomycetota</taxon>
        <taxon>Actinomycetes</taxon>
        <taxon>Kitasatosporales</taxon>
        <taxon>Streptomycetaceae</taxon>
        <taxon>Streptomyces</taxon>
    </lineage>
</organism>
<accession>P0DJQ3</accession>
<accession>P0DJQ4</accession>
<accession>P37819</accession>
<accession>P72400</accession>
<evidence type="ECO:0000255" key="1">
    <source>
        <dbReference type="PROSITE-ProRule" id="PRU00742"/>
    </source>
</evidence>
<evidence type="ECO:0000269" key="2">
    <source>
    </source>
</evidence>
<evidence type="ECO:0000305" key="3">
    <source>
    </source>
</evidence>
<evidence type="ECO:0007744" key="4">
    <source>
        <dbReference type="PDB" id="1GQ6"/>
    </source>
</evidence>
<evidence type="ECO:0007744" key="5">
    <source>
        <dbReference type="PDB" id="1GQ7"/>
    </source>
</evidence>
<evidence type="ECO:0007829" key="6">
    <source>
        <dbReference type="PDB" id="1GQ6"/>
    </source>
</evidence>
<evidence type="ECO:0007829" key="7">
    <source>
        <dbReference type="PDB" id="1GQ7"/>
    </source>
</evidence>
<sequence>MERIDSHVSPRYAQIPTFMRLPHDPQPRGYDVVVIGAPYDGGTSYRPGARFGPQAIRSESGLIHGVGIDRGPGTFDLINCVDAGDINLTPFDMNIAIDTAQSHLSGLLKANAAFLMIGGDHSLTVAALRAVAEQHGPLAVVHLDAHSDTNPAFYGGRYHHGTPFRHGIDEKLIDPAAMVQIGIRGHNPKPDSLDYARGHGVRVVTADEFGELGVGGTADLIREKVGQRPVYVSVDIDVVDPAFAPGTGTPAPGGLLSREVLALLRCVGDLKPVGFDVMEVSPLYDHGGITSILATEIGAELLYQYARAHRTQL</sequence>
<gene>
    <name type="primary">pah</name>
</gene>
<proteinExistence type="evidence at protein level"/>
<protein>
    <recommendedName>
        <fullName>Proclavaminate amidinohydrolase</fullName>
        <ecNumber evidence="2">3.5.3.22</ecNumber>
    </recommendedName>
    <alternativeName>
        <fullName>Proclavaminic acid amidino hydrolase</fullName>
    </alternativeName>
</protein>